<evidence type="ECO:0000250" key="1">
    <source>
        <dbReference type="UniProtKB" id="P56249"/>
    </source>
</evidence>
<evidence type="ECO:0000269" key="2">
    <source>
    </source>
</evidence>
<evidence type="ECO:0000303" key="3">
    <source>
    </source>
</evidence>
<evidence type="ECO:0000305" key="4"/>
<reference evidence="4" key="1">
    <citation type="journal article" date="2001" name="Rapid Commun. Mass Spectrom.">
        <title>Bioactive dahlein peptides from the skin secretions of the Australian aquatic frog Litoria dahlii: sequence determination by electrospray mass spectrometry.</title>
        <authorList>
            <person name="Wegener K.L."/>
            <person name="Brinkworth C.S."/>
            <person name="Bowie J.H."/>
            <person name="Wallace J.C."/>
            <person name="Tyler M.J."/>
        </authorList>
    </citation>
    <scope>PROTEIN SEQUENCE</scope>
    <scope>FUNCTION</scope>
    <scope>SUBCELLULAR LOCATION</scope>
    <scope>MASS SPECTROMETRY</scope>
    <source>
        <tissue evidence="2">Skin secretion</tissue>
    </source>
</reference>
<feature type="peptide" id="PRO_0000043777" description="Dahlein-5.1">
    <location>
        <begin position="1"/>
        <end position="20"/>
    </location>
</feature>
<dbReference type="GO" id="GO:0005576">
    <property type="term" value="C:extracellular region"/>
    <property type="evidence" value="ECO:0000314"/>
    <property type="project" value="UniProtKB"/>
</dbReference>
<dbReference type="GO" id="GO:0030235">
    <property type="term" value="F:nitric-oxide synthase regulator activity"/>
    <property type="evidence" value="ECO:0000314"/>
    <property type="project" value="UniProtKB"/>
</dbReference>
<dbReference type="GO" id="GO:0006952">
    <property type="term" value="P:defense response"/>
    <property type="evidence" value="ECO:0007669"/>
    <property type="project" value="UniProtKB-KW"/>
</dbReference>
<dbReference type="GO" id="GO:0051001">
    <property type="term" value="P:negative regulation of nitric-oxide synthase activity"/>
    <property type="evidence" value="ECO:0000314"/>
    <property type="project" value="UniProtKB"/>
</dbReference>
<name>DAH51_RANDH</name>
<organism>
    <name type="scientific">Ranoidea dahlii</name>
    <name type="common">Dahl's aquatic frog</name>
    <name type="synonym">Litoria dahlii</name>
    <dbReference type="NCBI Taxonomy" id="299727"/>
    <lineage>
        <taxon>Eukaryota</taxon>
        <taxon>Metazoa</taxon>
        <taxon>Chordata</taxon>
        <taxon>Craniata</taxon>
        <taxon>Vertebrata</taxon>
        <taxon>Euteleostomi</taxon>
        <taxon>Amphibia</taxon>
        <taxon>Batrachia</taxon>
        <taxon>Anura</taxon>
        <taxon>Neobatrachia</taxon>
        <taxon>Hyloidea</taxon>
        <taxon>Hylidae</taxon>
        <taxon>Pelodryadinae</taxon>
        <taxon>Ranoidea</taxon>
    </lineage>
</organism>
<proteinExistence type="evidence at protein level"/>
<accession>P84267</accession>
<comment type="function">
    <text evidence="1 2">Has no antimicrobial activity (PubMed:11555873). Strongly inhibits the formation of NO by neuronal nitric oxide synthase at micromolar concentrations (PubMed:11555873). Acts by a non-competitive mechanism, probably by binding to calcium/calmodulin and as a consequence blocking calmodulin attachment to nNOS (By similarity).</text>
</comment>
<comment type="subcellular location">
    <subcellularLocation>
        <location evidence="2">Secreted</location>
    </subcellularLocation>
</comment>
<comment type="tissue specificity">
    <text evidence="2">Expressed by the skin dorsal glands.</text>
</comment>
<comment type="mass spectrometry"/>
<sequence>GLLGSIGNAIGAFIANKLKP</sequence>
<keyword id="KW-0878">Amphibian defense peptide</keyword>
<keyword id="KW-0903">Direct protein sequencing</keyword>
<keyword id="KW-0964">Secreted</keyword>
<protein>
    <recommendedName>
        <fullName evidence="3">Dahlein-5.1</fullName>
    </recommendedName>
</protein>